<feature type="peptide" id="PRO_0000009036" description="Fibrinopeptide A">
    <location>
        <begin position="1"/>
        <end position="16"/>
    </location>
</feature>
<feature type="non-terminal residue">
    <location>
        <position position="17"/>
    </location>
</feature>
<proteinExistence type="evidence at protein level"/>
<comment type="function">
    <text evidence="1">Cleaved by the protease thrombin to yield monomers which, together with fibrinogen beta (FGB) and fibrinogen gamma (FGG), polymerize to form an insoluble fibrin matrix. Fibrin has a major function in hemostasis as one of the primary components of blood clots. In addition, functions during the early stages of wound repair to stabilize the lesion and guide cell migration during re-epithelialization. Was originally thought to be essential for platelet aggregation, based on in vitro studies using anticoagulated blood. However, subsequent studies have shown that it is not absolutely required for thrombus formation in vivo. Enhances expression of SELP in activated platelets via an ITGB3-dependent pathway. Maternal fibrinogen is essential for successful pregnancy. Fibrin deposition is also associated with infection, where it protects against IFNG-mediated hemorrhage. May also facilitate the immune response via both innate and T-cell mediated pathways.</text>
</comment>
<comment type="subunit">
    <text evidence="2">Heterohexamer; disulfide linked. Contains 2 sets of 3 non-identical chains (alpha, beta and gamma). The 2 heterotrimers are in head to head conformation with the N-termini in a small central domain (By similarity).</text>
</comment>
<comment type="subcellular location">
    <subcellularLocation>
        <location>Secreted</location>
    </subcellularLocation>
</comment>
<comment type="domain">
    <text evidence="2">A long coiled coil structure formed by 3 polypeptide chains connects the central nodule to the C-terminal domains (distal nodules). The long C-terminal ends of the alpha chains fold back, contributing a fourth strand to the coiled coil structure.</text>
</comment>
<comment type="PTM">
    <text>Conversion of fibrinogen to fibrin is triggered by thrombin, which cleaves fibrinopeptides A and B from alpha and beta chains, and thus exposes the N-terminal polymerization sites responsible for the formation of the soft clot. The soft clot is converted into the hard clot by factor XIIIA which catalyzes the epsilon-(gamma-glutamyl)lysine cross-linking between gamma chains (stronger) and between alpha chains (weaker) of different monomers.</text>
</comment>
<comment type="PTM">
    <text>Forms F13A-mediated cross-links between a glutamine and the epsilon-amino group of a lysine residue, forming fibronectin-fibrinogen heteropolymers.</text>
</comment>
<reference key="1">
    <citation type="journal article" date="1965" name="Acta Chem. Scand.">
        <title>Studies on fibrinopeptides from mammals.</title>
        <authorList>
            <person name="Blombaeck B."/>
            <person name="Blombaeck M."/>
            <person name="Grondahl N.J."/>
        </authorList>
    </citation>
    <scope>PROTEIN SEQUENCE</scope>
</reference>
<sequence>AEVQDKGEFLAEGGGVR</sequence>
<evidence type="ECO:0000250" key="1">
    <source>
        <dbReference type="UniProtKB" id="E9PV24"/>
    </source>
</evidence>
<evidence type="ECO:0000250" key="2">
    <source>
        <dbReference type="UniProtKB" id="P02671"/>
    </source>
</evidence>
<accession>P14460</accession>
<protein>
    <recommendedName>
        <fullName>Fibrinogen alpha chain</fullName>
    </recommendedName>
    <component>
        <recommendedName>
            <fullName>Fibrinopeptide A</fullName>
        </recommendedName>
    </component>
</protein>
<gene>
    <name type="primary">FGA</name>
</gene>
<name>FIBA_PIG</name>
<keyword id="KW-1064">Adaptive immunity</keyword>
<keyword id="KW-0094">Blood coagulation</keyword>
<keyword id="KW-0175">Coiled coil</keyword>
<keyword id="KW-0903">Direct protein sequencing</keyword>
<keyword id="KW-1015">Disulfide bond</keyword>
<keyword id="KW-0356">Hemostasis</keyword>
<keyword id="KW-0391">Immunity</keyword>
<keyword id="KW-0399">Innate immunity</keyword>
<keyword id="KW-1185">Reference proteome</keyword>
<keyword id="KW-0964">Secreted</keyword>
<organism>
    <name type="scientific">Sus scrofa</name>
    <name type="common">Pig</name>
    <dbReference type="NCBI Taxonomy" id="9823"/>
    <lineage>
        <taxon>Eukaryota</taxon>
        <taxon>Metazoa</taxon>
        <taxon>Chordata</taxon>
        <taxon>Craniata</taxon>
        <taxon>Vertebrata</taxon>
        <taxon>Euteleostomi</taxon>
        <taxon>Mammalia</taxon>
        <taxon>Eutheria</taxon>
        <taxon>Laurasiatheria</taxon>
        <taxon>Artiodactyla</taxon>
        <taxon>Suina</taxon>
        <taxon>Suidae</taxon>
        <taxon>Sus</taxon>
    </lineage>
</organism>
<dbReference type="PIR" id="E29501">
    <property type="entry name" value="E29501"/>
</dbReference>
<dbReference type="STRING" id="9823.ENSSSCP00000009602"/>
<dbReference type="PaxDb" id="9823-ENSSSCP00000009602"/>
<dbReference type="PeptideAtlas" id="P14460"/>
<dbReference type="eggNOG" id="KOG2579">
    <property type="taxonomic scope" value="Eukaryota"/>
</dbReference>
<dbReference type="InParanoid" id="P14460"/>
<dbReference type="Proteomes" id="UP000008227">
    <property type="component" value="Unplaced"/>
</dbReference>
<dbReference type="Proteomes" id="UP000314985">
    <property type="component" value="Unplaced"/>
</dbReference>
<dbReference type="Proteomes" id="UP000694570">
    <property type="component" value="Unplaced"/>
</dbReference>
<dbReference type="Proteomes" id="UP000694571">
    <property type="component" value="Unplaced"/>
</dbReference>
<dbReference type="Proteomes" id="UP000694720">
    <property type="component" value="Unplaced"/>
</dbReference>
<dbReference type="Proteomes" id="UP000694722">
    <property type="component" value="Unplaced"/>
</dbReference>
<dbReference type="Proteomes" id="UP000694723">
    <property type="component" value="Unplaced"/>
</dbReference>
<dbReference type="Proteomes" id="UP000694724">
    <property type="component" value="Unplaced"/>
</dbReference>
<dbReference type="Proteomes" id="UP000694725">
    <property type="component" value="Unplaced"/>
</dbReference>
<dbReference type="Proteomes" id="UP000694726">
    <property type="component" value="Unplaced"/>
</dbReference>
<dbReference type="Proteomes" id="UP000694727">
    <property type="component" value="Unplaced"/>
</dbReference>
<dbReference type="Proteomes" id="UP000694728">
    <property type="component" value="Unplaced"/>
</dbReference>
<dbReference type="GO" id="GO:0005576">
    <property type="term" value="C:extracellular region"/>
    <property type="evidence" value="ECO:0007669"/>
    <property type="project" value="UniProtKB-SubCell"/>
</dbReference>
<dbReference type="GO" id="GO:0002250">
    <property type="term" value="P:adaptive immune response"/>
    <property type="evidence" value="ECO:0007669"/>
    <property type="project" value="UniProtKB-KW"/>
</dbReference>
<dbReference type="GO" id="GO:0007596">
    <property type="term" value="P:blood coagulation"/>
    <property type="evidence" value="ECO:0007669"/>
    <property type="project" value="UniProtKB-KW"/>
</dbReference>
<dbReference type="GO" id="GO:0045087">
    <property type="term" value="P:innate immune response"/>
    <property type="evidence" value="ECO:0007669"/>
    <property type="project" value="UniProtKB-KW"/>
</dbReference>